<name>RS9_STRA1</name>
<sequence>MAQAQYAGTGRRKNAVARVRLVPGTGKITINKKDVEEYIPHADLRLVINQPFAVTSTQGSYDVFVNVVGGGYAGQSGAIRHGISRALLEVDPDFRDSLKRAGLLTRDARMVERKKPGLKKARKASQFSKR</sequence>
<protein>
    <recommendedName>
        <fullName evidence="1">Small ribosomal subunit protein uS9</fullName>
    </recommendedName>
    <alternativeName>
        <fullName evidence="2">30S ribosomal protein S9</fullName>
    </alternativeName>
</protein>
<proteinExistence type="inferred from homology"/>
<accession>Q3K3F8</accession>
<keyword id="KW-0687">Ribonucleoprotein</keyword>
<keyword id="KW-0689">Ribosomal protein</keyword>
<comment type="similarity">
    <text evidence="1">Belongs to the universal ribosomal protein uS9 family.</text>
</comment>
<feature type="chain" id="PRO_1000051338" description="Small ribosomal subunit protein uS9">
    <location>
        <begin position="1"/>
        <end position="130"/>
    </location>
</feature>
<organism>
    <name type="scientific">Streptococcus agalactiae serotype Ia (strain ATCC 27591 / A909 / CDC SS700)</name>
    <dbReference type="NCBI Taxonomy" id="205921"/>
    <lineage>
        <taxon>Bacteria</taxon>
        <taxon>Bacillati</taxon>
        <taxon>Bacillota</taxon>
        <taxon>Bacilli</taxon>
        <taxon>Lactobacillales</taxon>
        <taxon>Streptococcaceae</taxon>
        <taxon>Streptococcus</taxon>
    </lineage>
</organism>
<dbReference type="EMBL" id="CP000114">
    <property type="protein sequence ID" value="ABA44527.1"/>
    <property type="molecule type" value="Genomic_DNA"/>
</dbReference>
<dbReference type="RefSeq" id="WP_000035940.1">
    <property type="nucleotide sequence ID" value="NC_007432.1"/>
</dbReference>
<dbReference type="SMR" id="Q3K3F8"/>
<dbReference type="GeneID" id="66885190"/>
<dbReference type="KEGG" id="sak:SAK_0277"/>
<dbReference type="HOGENOM" id="CLU_046483_2_1_9"/>
<dbReference type="GO" id="GO:0022627">
    <property type="term" value="C:cytosolic small ribosomal subunit"/>
    <property type="evidence" value="ECO:0007669"/>
    <property type="project" value="TreeGrafter"/>
</dbReference>
<dbReference type="GO" id="GO:0003723">
    <property type="term" value="F:RNA binding"/>
    <property type="evidence" value="ECO:0007669"/>
    <property type="project" value="TreeGrafter"/>
</dbReference>
<dbReference type="GO" id="GO:0003735">
    <property type="term" value="F:structural constituent of ribosome"/>
    <property type="evidence" value="ECO:0007669"/>
    <property type="project" value="InterPro"/>
</dbReference>
<dbReference type="GO" id="GO:0006412">
    <property type="term" value="P:translation"/>
    <property type="evidence" value="ECO:0007669"/>
    <property type="project" value="UniProtKB-UniRule"/>
</dbReference>
<dbReference type="FunFam" id="3.30.230.10:FF:000001">
    <property type="entry name" value="30S ribosomal protein S9"/>
    <property type="match status" value="1"/>
</dbReference>
<dbReference type="Gene3D" id="3.30.230.10">
    <property type="match status" value="1"/>
</dbReference>
<dbReference type="HAMAP" id="MF_00532_B">
    <property type="entry name" value="Ribosomal_uS9_B"/>
    <property type="match status" value="1"/>
</dbReference>
<dbReference type="InterPro" id="IPR020568">
    <property type="entry name" value="Ribosomal_Su5_D2-typ_SF"/>
</dbReference>
<dbReference type="InterPro" id="IPR000754">
    <property type="entry name" value="Ribosomal_uS9"/>
</dbReference>
<dbReference type="InterPro" id="IPR023035">
    <property type="entry name" value="Ribosomal_uS9_bac/plastid"/>
</dbReference>
<dbReference type="InterPro" id="IPR020574">
    <property type="entry name" value="Ribosomal_uS9_CS"/>
</dbReference>
<dbReference type="InterPro" id="IPR014721">
    <property type="entry name" value="Ribsml_uS5_D2-typ_fold_subgr"/>
</dbReference>
<dbReference type="NCBIfam" id="NF001099">
    <property type="entry name" value="PRK00132.1"/>
    <property type="match status" value="1"/>
</dbReference>
<dbReference type="PANTHER" id="PTHR21569">
    <property type="entry name" value="RIBOSOMAL PROTEIN S9"/>
    <property type="match status" value="1"/>
</dbReference>
<dbReference type="PANTHER" id="PTHR21569:SF1">
    <property type="entry name" value="SMALL RIBOSOMAL SUBUNIT PROTEIN US9M"/>
    <property type="match status" value="1"/>
</dbReference>
<dbReference type="Pfam" id="PF00380">
    <property type="entry name" value="Ribosomal_S9"/>
    <property type="match status" value="1"/>
</dbReference>
<dbReference type="SUPFAM" id="SSF54211">
    <property type="entry name" value="Ribosomal protein S5 domain 2-like"/>
    <property type="match status" value="1"/>
</dbReference>
<dbReference type="PROSITE" id="PS00360">
    <property type="entry name" value="RIBOSOMAL_S9"/>
    <property type="match status" value="1"/>
</dbReference>
<gene>
    <name evidence="1" type="primary">rpsI</name>
    <name type="ordered locus">SAK_0277</name>
</gene>
<evidence type="ECO:0000255" key="1">
    <source>
        <dbReference type="HAMAP-Rule" id="MF_00532"/>
    </source>
</evidence>
<evidence type="ECO:0000305" key="2"/>
<reference key="1">
    <citation type="journal article" date="2005" name="Proc. Natl. Acad. Sci. U.S.A.">
        <title>Genome analysis of multiple pathogenic isolates of Streptococcus agalactiae: implications for the microbial 'pan-genome'.</title>
        <authorList>
            <person name="Tettelin H."/>
            <person name="Masignani V."/>
            <person name="Cieslewicz M.J."/>
            <person name="Donati C."/>
            <person name="Medini D."/>
            <person name="Ward N.L."/>
            <person name="Angiuoli S.V."/>
            <person name="Crabtree J."/>
            <person name="Jones A.L."/>
            <person name="Durkin A.S."/>
            <person name="DeBoy R.T."/>
            <person name="Davidsen T.M."/>
            <person name="Mora M."/>
            <person name="Scarselli M."/>
            <person name="Margarit y Ros I."/>
            <person name="Peterson J.D."/>
            <person name="Hauser C.R."/>
            <person name="Sundaram J.P."/>
            <person name="Nelson W.C."/>
            <person name="Madupu R."/>
            <person name="Brinkac L.M."/>
            <person name="Dodson R.J."/>
            <person name="Rosovitz M.J."/>
            <person name="Sullivan S.A."/>
            <person name="Daugherty S.C."/>
            <person name="Haft D.H."/>
            <person name="Selengut J."/>
            <person name="Gwinn M.L."/>
            <person name="Zhou L."/>
            <person name="Zafar N."/>
            <person name="Khouri H."/>
            <person name="Radune D."/>
            <person name="Dimitrov G."/>
            <person name="Watkins K."/>
            <person name="O'Connor K.J."/>
            <person name="Smith S."/>
            <person name="Utterback T.R."/>
            <person name="White O."/>
            <person name="Rubens C.E."/>
            <person name="Grandi G."/>
            <person name="Madoff L.C."/>
            <person name="Kasper D.L."/>
            <person name="Telford J.L."/>
            <person name="Wessels M.R."/>
            <person name="Rappuoli R."/>
            <person name="Fraser C.M."/>
        </authorList>
    </citation>
    <scope>NUCLEOTIDE SEQUENCE [LARGE SCALE GENOMIC DNA]</scope>
    <source>
        <strain>ATCC 27591 / A909 / CDC SS700</strain>
    </source>
</reference>